<organism>
    <name type="scientific">Gallus gallus</name>
    <name type="common">Chicken</name>
    <dbReference type="NCBI Taxonomy" id="9031"/>
    <lineage>
        <taxon>Eukaryota</taxon>
        <taxon>Metazoa</taxon>
        <taxon>Chordata</taxon>
        <taxon>Craniata</taxon>
        <taxon>Vertebrata</taxon>
        <taxon>Euteleostomi</taxon>
        <taxon>Archelosauria</taxon>
        <taxon>Archosauria</taxon>
        <taxon>Dinosauria</taxon>
        <taxon>Saurischia</taxon>
        <taxon>Theropoda</taxon>
        <taxon>Coelurosauria</taxon>
        <taxon>Aves</taxon>
        <taxon>Neognathae</taxon>
        <taxon>Galloanserae</taxon>
        <taxon>Galliformes</taxon>
        <taxon>Phasianidae</taxon>
        <taxon>Phasianinae</taxon>
        <taxon>Gallus</taxon>
    </lineage>
</organism>
<protein>
    <recommendedName>
        <fullName>Mitochondrial Rho GTPase 1</fullName>
        <shortName>MIRO-1</shortName>
        <ecNumber evidence="1">3.6.5.-</ecNumber>
    </recommendedName>
    <alternativeName>
        <fullName>Ras homolog gene family member T1</fullName>
    </alternativeName>
</protein>
<keyword id="KW-0106">Calcium</keyword>
<keyword id="KW-0342">GTP-binding</keyword>
<keyword id="KW-0378">Hydrolase</keyword>
<keyword id="KW-0460">Magnesium</keyword>
<keyword id="KW-0472">Membrane</keyword>
<keyword id="KW-0479">Metal-binding</keyword>
<keyword id="KW-0496">Mitochondrion</keyword>
<keyword id="KW-1000">Mitochondrion outer membrane</keyword>
<keyword id="KW-0547">Nucleotide-binding</keyword>
<keyword id="KW-1185">Reference proteome</keyword>
<keyword id="KW-0677">Repeat</keyword>
<keyword id="KW-0812">Transmembrane</keyword>
<keyword id="KW-1133">Transmembrane helix</keyword>
<name>MIRO1_CHICK</name>
<gene>
    <name type="primary">RHOT1</name>
    <name type="ORF">RCJMB04_2p2</name>
</gene>
<dbReference type="EC" id="3.6.5.-" evidence="1"/>
<dbReference type="EMBL" id="AJ719511">
    <property type="protein sequence ID" value="CAG31170.1"/>
    <property type="molecule type" value="mRNA"/>
</dbReference>
<dbReference type="RefSeq" id="NP_001006208.1">
    <property type="nucleotide sequence ID" value="NM_001006208.1"/>
</dbReference>
<dbReference type="SMR" id="Q5ZM73"/>
<dbReference type="FunCoup" id="Q5ZM73">
    <property type="interactions" value="1952"/>
</dbReference>
<dbReference type="STRING" id="9031.ENSGALP00000005362"/>
<dbReference type="PaxDb" id="9031-ENSGALP00000005362"/>
<dbReference type="GeneID" id="417410"/>
<dbReference type="KEGG" id="gga:417410"/>
<dbReference type="CTD" id="55288"/>
<dbReference type="VEuPathDB" id="HostDB:geneid_417410"/>
<dbReference type="eggNOG" id="KOG1707">
    <property type="taxonomic scope" value="Eukaryota"/>
</dbReference>
<dbReference type="InParanoid" id="Q5ZM73"/>
<dbReference type="OrthoDB" id="10020961at2759"/>
<dbReference type="PhylomeDB" id="Q5ZM73"/>
<dbReference type="PRO" id="PR:Q5ZM73"/>
<dbReference type="Proteomes" id="UP000000539">
    <property type="component" value="Unassembled WGS sequence"/>
</dbReference>
<dbReference type="GO" id="GO:0005741">
    <property type="term" value="C:mitochondrial outer membrane"/>
    <property type="evidence" value="ECO:0000250"/>
    <property type="project" value="UniProtKB"/>
</dbReference>
<dbReference type="GO" id="GO:0005509">
    <property type="term" value="F:calcium ion binding"/>
    <property type="evidence" value="ECO:0007669"/>
    <property type="project" value="InterPro"/>
</dbReference>
<dbReference type="GO" id="GO:0005525">
    <property type="term" value="F:GTP binding"/>
    <property type="evidence" value="ECO:0000318"/>
    <property type="project" value="GO_Central"/>
</dbReference>
<dbReference type="GO" id="GO:0003924">
    <property type="term" value="F:GTPase activity"/>
    <property type="evidence" value="ECO:0000318"/>
    <property type="project" value="GO_Central"/>
</dbReference>
<dbReference type="GO" id="GO:0019725">
    <property type="term" value="P:cellular homeostasis"/>
    <property type="evidence" value="ECO:0000250"/>
    <property type="project" value="UniProtKB"/>
</dbReference>
<dbReference type="GO" id="GO:0097345">
    <property type="term" value="P:mitochondrial outer membrane permeabilization"/>
    <property type="evidence" value="ECO:0000250"/>
    <property type="project" value="UniProtKB"/>
</dbReference>
<dbReference type="GO" id="GO:0007005">
    <property type="term" value="P:mitochondrion organization"/>
    <property type="evidence" value="ECO:0000318"/>
    <property type="project" value="GO_Central"/>
</dbReference>
<dbReference type="GO" id="GO:0047497">
    <property type="term" value="P:mitochondrion transport along microtubule"/>
    <property type="evidence" value="ECO:0000250"/>
    <property type="project" value="UniProtKB"/>
</dbReference>
<dbReference type="CDD" id="cd01893">
    <property type="entry name" value="Miro1"/>
    <property type="match status" value="1"/>
</dbReference>
<dbReference type="CDD" id="cd01892">
    <property type="entry name" value="Miro2"/>
    <property type="match status" value="1"/>
</dbReference>
<dbReference type="FunFam" id="1.10.238.10:FF:000011">
    <property type="entry name" value="Mitochondrial Rho GTPase"/>
    <property type="match status" value="1"/>
</dbReference>
<dbReference type="FunFam" id="1.10.238.10:FF:000021">
    <property type="entry name" value="Mitochondrial Rho GTPase"/>
    <property type="match status" value="1"/>
</dbReference>
<dbReference type="FunFam" id="3.40.50.300:FF:000170">
    <property type="entry name" value="Mitochondrial Rho GTPase"/>
    <property type="match status" value="1"/>
</dbReference>
<dbReference type="FunFam" id="3.40.50.300:FF:000248">
    <property type="entry name" value="Mitochondrial Rho GTPase"/>
    <property type="match status" value="1"/>
</dbReference>
<dbReference type="Gene3D" id="1.10.238.10">
    <property type="entry name" value="EF-hand"/>
    <property type="match status" value="2"/>
</dbReference>
<dbReference type="Gene3D" id="3.40.50.300">
    <property type="entry name" value="P-loop containing nucleotide triphosphate hydrolases"/>
    <property type="match status" value="2"/>
</dbReference>
<dbReference type="InterPro" id="IPR011992">
    <property type="entry name" value="EF-hand-dom_pair"/>
</dbReference>
<dbReference type="InterPro" id="IPR018247">
    <property type="entry name" value="EF_Hand_1_Ca_BS"/>
</dbReference>
<dbReference type="InterPro" id="IPR013566">
    <property type="entry name" value="EF_hand_assoc_1"/>
</dbReference>
<dbReference type="InterPro" id="IPR013567">
    <property type="entry name" value="EF_hand_assoc_2"/>
</dbReference>
<dbReference type="InterPro" id="IPR002048">
    <property type="entry name" value="EF_hand_dom"/>
</dbReference>
<dbReference type="InterPro" id="IPR021181">
    <property type="entry name" value="Miro"/>
</dbReference>
<dbReference type="InterPro" id="IPR052266">
    <property type="entry name" value="Miro-EF-hand_domain"/>
</dbReference>
<dbReference type="InterPro" id="IPR020860">
    <property type="entry name" value="MIRO_dom"/>
</dbReference>
<dbReference type="InterPro" id="IPR027417">
    <property type="entry name" value="P-loop_NTPase"/>
</dbReference>
<dbReference type="InterPro" id="IPR001806">
    <property type="entry name" value="Small_GTPase"/>
</dbReference>
<dbReference type="PANTHER" id="PTHR46819">
    <property type="entry name" value="EF-HAND CALCIUM-BINDING DOMAIN-CONTAINING PROTEIN 7"/>
    <property type="match status" value="1"/>
</dbReference>
<dbReference type="PANTHER" id="PTHR46819:SF1">
    <property type="entry name" value="EF-HAND CALCIUM-BINDING DOMAIN-CONTAINING PROTEIN 7"/>
    <property type="match status" value="1"/>
</dbReference>
<dbReference type="Pfam" id="PF08355">
    <property type="entry name" value="EF_assoc_1"/>
    <property type="match status" value="1"/>
</dbReference>
<dbReference type="Pfam" id="PF08356">
    <property type="entry name" value="EF_assoc_2"/>
    <property type="match status" value="1"/>
</dbReference>
<dbReference type="Pfam" id="PF00071">
    <property type="entry name" value="Ras"/>
    <property type="match status" value="2"/>
</dbReference>
<dbReference type="PIRSF" id="PIRSF037488">
    <property type="entry name" value="Mt_Rho_GTPase"/>
    <property type="match status" value="1"/>
</dbReference>
<dbReference type="PRINTS" id="PR00449">
    <property type="entry name" value="RASTRNSFRMNG"/>
</dbReference>
<dbReference type="SMART" id="SM00054">
    <property type="entry name" value="EFh"/>
    <property type="match status" value="2"/>
</dbReference>
<dbReference type="SMART" id="SM00175">
    <property type="entry name" value="RAB"/>
    <property type="match status" value="1"/>
</dbReference>
<dbReference type="SMART" id="SM00173">
    <property type="entry name" value="RAS"/>
    <property type="match status" value="1"/>
</dbReference>
<dbReference type="SMART" id="SM00174">
    <property type="entry name" value="RHO"/>
    <property type="match status" value="1"/>
</dbReference>
<dbReference type="SUPFAM" id="SSF47473">
    <property type="entry name" value="EF-hand"/>
    <property type="match status" value="1"/>
</dbReference>
<dbReference type="SUPFAM" id="SSF52540">
    <property type="entry name" value="P-loop containing nucleoside triphosphate hydrolases"/>
    <property type="match status" value="2"/>
</dbReference>
<dbReference type="PROSITE" id="PS00018">
    <property type="entry name" value="EF_HAND_1"/>
    <property type="match status" value="1"/>
</dbReference>
<dbReference type="PROSITE" id="PS50222">
    <property type="entry name" value="EF_HAND_2"/>
    <property type="match status" value="2"/>
</dbReference>
<dbReference type="PROSITE" id="PS51423">
    <property type="entry name" value="MIRO"/>
    <property type="match status" value="2"/>
</dbReference>
<comment type="function">
    <text evidence="1">Atypical mitochondrial nucleoside-triphosphatase (NTPase) involved in mitochondrial trafficking. Probably involved in control of anterograde transport of mitochondria and their subcellular distribution. Can hydrolyze GTP, ATP and UTP (By similarity).</text>
</comment>
<comment type="catalytic activity">
    <reaction evidence="1">
        <text>GTP + H2O = GDP + phosphate + H(+)</text>
        <dbReference type="Rhea" id="RHEA:19669"/>
        <dbReference type="ChEBI" id="CHEBI:15377"/>
        <dbReference type="ChEBI" id="CHEBI:15378"/>
        <dbReference type="ChEBI" id="CHEBI:37565"/>
        <dbReference type="ChEBI" id="CHEBI:43474"/>
        <dbReference type="ChEBI" id="CHEBI:58189"/>
    </reaction>
    <physiologicalReaction direction="left-to-right" evidence="1">
        <dbReference type="Rhea" id="RHEA:19670"/>
    </physiologicalReaction>
</comment>
<comment type="catalytic activity">
    <reaction evidence="1">
        <text>ATP + H2O = ADP + phosphate + H(+)</text>
        <dbReference type="Rhea" id="RHEA:13065"/>
        <dbReference type="ChEBI" id="CHEBI:15377"/>
        <dbReference type="ChEBI" id="CHEBI:15378"/>
        <dbReference type="ChEBI" id="CHEBI:30616"/>
        <dbReference type="ChEBI" id="CHEBI:43474"/>
        <dbReference type="ChEBI" id="CHEBI:456216"/>
    </reaction>
    <physiologicalReaction direction="left-to-right" evidence="1">
        <dbReference type="Rhea" id="RHEA:13066"/>
    </physiologicalReaction>
</comment>
<comment type="catalytic activity">
    <reaction evidence="1">
        <text>UTP + H2O = UDP + phosphate + H(+)</text>
        <dbReference type="Rhea" id="RHEA:64900"/>
        <dbReference type="ChEBI" id="CHEBI:15377"/>
        <dbReference type="ChEBI" id="CHEBI:15378"/>
        <dbReference type="ChEBI" id="CHEBI:43474"/>
        <dbReference type="ChEBI" id="CHEBI:46398"/>
        <dbReference type="ChEBI" id="CHEBI:58223"/>
    </reaction>
    <physiologicalReaction direction="left-to-right" evidence="1">
        <dbReference type="Rhea" id="RHEA:64901"/>
    </physiologicalReaction>
</comment>
<comment type="subunit">
    <text evidence="1">Homodimer.</text>
</comment>
<comment type="subcellular location">
    <subcellularLocation>
        <location evidence="1">Mitochondrion outer membrane</location>
        <topology evidence="1">Single-pass type IV membrane protein</topology>
    </subcellularLocation>
</comment>
<comment type="similarity">
    <text evidence="4 5">Belongs to the mitochondrial Rho GTPase family.</text>
</comment>
<sequence>MKKDVRILLVGEPRVGKTSLIMSLVSEEFPEEVPPRAEEITIPADVTPERVPTHIVDYSEAEQNDEQLYHEISQANVICIVYAVNNKNSIDKVTSRWIPLINERTDKDSRLPLILVGNKSDLVEYSSMETILPIMNQYTEIETCVECSAKNLKNRSELFYYAQKAVLHPTGPLYCPEEKEMKPACIKALTRIFRISDQDNDGTLNDAELNFFQRICFNTPLAPQALEDVKNVVRKNVSDGVADNGLTLKGFLFLHTLFIQRGRHETTWTVLRRFGYDDDLELTPEYLFPLLKIPPDCTTELNHHAYLFLQSIFDKHDLDRDCALSPDELKDLFKVFPYMPWGPDVNNTVCTNGKGGWITYQGFLSQWTLTTYLDVQRCLEYLGYLGYSILAEQESQASAITVTRDKKIDLQKKQTQRNVFRCNVVGMKGCGKSGVLQALLGRNLMRQRQIRAEHKSYYAINTVYVYGQEKYLLLHDVSDSEFLTDAETICDVVCLVYDVSNPKSFEYCVRIFKQHFMDSRIPCLVVAAKSDLHEVRQEYSISPAEFCKKHKMPPPQAFTCNTVDMPSKDIFVKLTTMAMYPHVTQADLKSSTFWLRASFGATVFAFLGFAMYKALIKQR</sequence>
<accession>Q5ZM73</accession>
<proteinExistence type="evidence at transcript level"/>
<feature type="chain" id="PRO_0000239315" description="Mitochondrial Rho GTPase 1">
    <location>
        <begin position="1"/>
        <end position="619"/>
    </location>
</feature>
<feature type="topological domain" description="Cytoplasmic" evidence="2">
    <location>
        <begin position="1"/>
        <end position="593"/>
    </location>
</feature>
<feature type="transmembrane region" description="Helical; Anchor for type IV membrane protein" evidence="2">
    <location>
        <begin position="594"/>
        <end position="616"/>
    </location>
</feature>
<feature type="topological domain" description="Mitochondrial intermembrane" evidence="2">
    <location>
        <begin position="617"/>
        <end position="619"/>
    </location>
</feature>
<feature type="domain" description="Miro 1" evidence="4">
    <location>
        <begin position="2"/>
        <end position="168"/>
    </location>
</feature>
<feature type="domain" description="EF-hand 1" evidence="3">
    <location>
        <begin position="184"/>
        <end position="219"/>
    </location>
</feature>
<feature type="domain" description="EF-hand 2" evidence="3">
    <location>
        <begin position="304"/>
        <end position="339"/>
    </location>
</feature>
<feature type="domain" description="Miro 2" evidence="4">
    <location>
        <begin position="417"/>
        <end position="580"/>
    </location>
</feature>
<feature type="binding site" evidence="1">
    <location>
        <position position="14"/>
    </location>
    <ligand>
        <name>GTP</name>
        <dbReference type="ChEBI" id="CHEBI:37565"/>
        <label>1</label>
    </ligand>
</feature>
<feature type="binding site" evidence="1">
    <location>
        <position position="16"/>
    </location>
    <ligand>
        <name>GTP</name>
        <dbReference type="ChEBI" id="CHEBI:37565"/>
        <label>1</label>
    </ligand>
</feature>
<feature type="binding site" evidence="1">
    <location>
        <position position="17"/>
    </location>
    <ligand>
        <name>GTP</name>
        <dbReference type="ChEBI" id="CHEBI:37565"/>
        <label>1</label>
    </ligand>
</feature>
<feature type="binding site" evidence="1">
    <location>
        <position position="18"/>
    </location>
    <ligand>
        <name>GTP</name>
        <dbReference type="ChEBI" id="CHEBI:37565"/>
        <label>1</label>
    </ligand>
</feature>
<feature type="binding site" evidence="1">
    <location>
        <position position="18"/>
    </location>
    <ligand>
        <name>Mg(2+)</name>
        <dbReference type="ChEBI" id="CHEBI:18420"/>
        <label>1</label>
    </ligand>
</feature>
<feature type="binding site" evidence="1">
    <location>
        <position position="19"/>
    </location>
    <ligand>
        <name>GTP</name>
        <dbReference type="ChEBI" id="CHEBI:37565"/>
        <label>1</label>
    </ligand>
</feature>
<feature type="binding site" evidence="1">
    <location>
        <position position="35"/>
    </location>
    <ligand>
        <name>Mg(2+)</name>
        <dbReference type="ChEBI" id="CHEBI:18420"/>
        <label>1</label>
    </ligand>
</feature>
<feature type="binding site" evidence="1">
    <location>
        <position position="57"/>
    </location>
    <ligand>
        <name>Mg(2+)</name>
        <dbReference type="ChEBI" id="CHEBI:18420"/>
        <label>1</label>
    </ligand>
</feature>
<feature type="binding site" evidence="1">
    <location>
        <position position="59"/>
    </location>
    <ligand>
        <name>GTP</name>
        <dbReference type="ChEBI" id="CHEBI:37565"/>
        <label>1</label>
    </ligand>
</feature>
<feature type="binding site" evidence="1">
    <location>
        <position position="118"/>
    </location>
    <ligand>
        <name>GTP</name>
        <dbReference type="ChEBI" id="CHEBI:37565"/>
        <label>1</label>
    </ligand>
</feature>
<feature type="binding site" evidence="1">
    <location>
        <position position="119"/>
    </location>
    <ligand>
        <name>GTP</name>
        <dbReference type="ChEBI" id="CHEBI:37565"/>
        <label>1</label>
    </ligand>
</feature>
<feature type="binding site" evidence="1">
    <location>
        <position position="121"/>
    </location>
    <ligand>
        <name>GTP</name>
        <dbReference type="ChEBI" id="CHEBI:37565"/>
        <label>1</label>
    </ligand>
</feature>
<feature type="binding site" evidence="1">
    <location>
        <position position="149"/>
    </location>
    <ligand>
        <name>GTP</name>
        <dbReference type="ChEBI" id="CHEBI:37565"/>
        <label>1</label>
    </ligand>
</feature>
<feature type="binding site" evidence="1">
    <location>
        <position position="150"/>
    </location>
    <ligand>
        <name>GTP</name>
        <dbReference type="ChEBI" id="CHEBI:37565"/>
        <label>1</label>
    </ligand>
</feature>
<feature type="binding site" evidence="3">
    <location>
        <position position="197"/>
    </location>
    <ligand>
        <name>Ca(2+)</name>
        <dbReference type="ChEBI" id="CHEBI:29108"/>
        <label>1</label>
    </ligand>
</feature>
<feature type="binding site" evidence="3">
    <location>
        <position position="199"/>
    </location>
    <ligand>
        <name>Ca(2+)</name>
        <dbReference type="ChEBI" id="CHEBI:29108"/>
        <label>1</label>
    </ligand>
</feature>
<feature type="binding site" evidence="3">
    <location>
        <position position="201"/>
    </location>
    <ligand>
        <name>Ca(2+)</name>
        <dbReference type="ChEBI" id="CHEBI:29108"/>
        <label>1</label>
    </ligand>
</feature>
<feature type="binding site" evidence="3">
    <location>
        <position position="203"/>
    </location>
    <ligand>
        <name>Ca(2+)</name>
        <dbReference type="ChEBI" id="CHEBI:29108"/>
        <label>1</label>
    </ligand>
</feature>
<feature type="binding site" evidence="3">
    <location>
        <position position="208"/>
    </location>
    <ligand>
        <name>Ca(2+)</name>
        <dbReference type="ChEBI" id="CHEBI:29108"/>
        <label>1</label>
    </ligand>
</feature>
<feature type="binding site" evidence="1">
    <location>
        <position position="317"/>
    </location>
    <ligand>
        <name>Ca(2+)</name>
        <dbReference type="ChEBI" id="CHEBI:29108"/>
        <label>2</label>
    </ligand>
</feature>
<feature type="binding site" evidence="1">
    <location>
        <position position="319"/>
    </location>
    <ligand>
        <name>Ca(2+)</name>
        <dbReference type="ChEBI" id="CHEBI:29108"/>
        <label>2</label>
    </ligand>
</feature>
<feature type="binding site" evidence="1">
    <location>
        <position position="321"/>
    </location>
    <ligand>
        <name>Ca(2+)</name>
        <dbReference type="ChEBI" id="CHEBI:29108"/>
        <label>2</label>
    </ligand>
</feature>
<feature type="binding site" evidence="1">
    <location>
        <position position="323"/>
    </location>
    <ligand>
        <name>Ca(2+)</name>
        <dbReference type="ChEBI" id="CHEBI:29108"/>
        <label>2</label>
    </ligand>
</feature>
<feature type="binding site" evidence="1">
    <location>
        <position position="328"/>
    </location>
    <ligand>
        <name>Ca(2+)</name>
        <dbReference type="ChEBI" id="CHEBI:29108"/>
        <label>2</label>
    </ligand>
</feature>
<feature type="binding site" evidence="1">
    <location>
        <position position="429"/>
    </location>
    <ligand>
        <name>GTP</name>
        <dbReference type="ChEBI" id="CHEBI:37565"/>
        <label>2</label>
    </ligand>
</feature>
<feature type="binding site" evidence="1">
    <location>
        <position position="429"/>
    </location>
    <ligand>
        <name>Mg(2+)</name>
        <dbReference type="ChEBI" id="CHEBI:18420"/>
        <label>2</label>
    </ligand>
</feature>
<feature type="binding site" evidence="1">
    <location>
        <position position="430"/>
    </location>
    <ligand>
        <name>GTP</name>
        <dbReference type="ChEBI" id="CHEBI:37565"/>
        <label>2</label>
    </ligand>
</feature>
<feature type="binding site" evidence="1">
    <location>
        <position position="431"/>
    </location>
    <ligand>
        <name>GTP</name>
        <dbReference type="ChEBI" id="CHEBI:37565"/>
        <label>2</label>
    </ligand>
</feature>
<feature type="binding site" evidence="1">
    <location>
        <position position="432"/>
    </location>
    <ligand>
        <name>GTP</name>
        <dbReference type="ChEBI" id="CHEBI:37565"/>
        <label>2</label>
    </ligand>
</feature>
<feature type="binding site" evidence="1">
    <location>
        <position position="433"/>
    </location>
    <ligand>
        <name>GTP</name>
        <dbReference type="ChEBI" id="CHEBI:37565"/>
        <label>2</label>
    </ligand>
</feature>
<feature type="binding site" evidence="1">
    <location>
        <position position="434"/>
    </location>
    <ligand>
        <name>GTP</name>
        <dbReference type="ChEBI" id="CHEBI:37565"/>
        <label>2</label>
    </ligand>
</feature>
<feature type="binding site" evidence="1">
    <location>
        <position position="448"/>
    </location>
    <ligand>
        <name>GTP</name>
        <dbReference type="ChEBI" id="CHEBI:37565"/>
        <label>2</label>
    </ligand>
</feature>
<feature type="binding site" evidence="1">
    <location>
        <position position="529"/>
    </location>
    <ligand>
        <name>GTP</name>
        <dbReference type="ChEBI" id="CHEBI:37565"/>
        <label>2</label>
    </ligand>
</feature>
<feature type="binding site" evidence="1">
    <location>
        <position position="531"/>
    </location>
    <ligand>
        <name>GTP</name>
        <dbReference type="ChEBI" id="CHEBI:37565"/>
        <label>2</label>
    </ligand>
</feature>
<feature type="binding site" evidence="1">
    <location>
        <position position="559"/>
    </location>
    <ligand>
        <name>GTP</name>
        <dbReference type="ChEBI" id="CHEBI:37565"/>
        <label>2</label>
    </ligand>
</feature>
<feature type="binding site" evidence="1">
    <location>
        <position position="560"/>
    </location>
    <ligand>
        <name>GTP</name>
        <dbReference type="ChEBI" id="CHEBI:37565"/>
        <label>2</label>
    </ligand>
</feature>
<reference key="1">
    <citation type="journal article" date="2005" name="Genome Biol.">
        <title>Full-length cDNAs from chicken bursal lymphocytes to facilitate gene function analysis.</title>
        <authorList>
            <person name="Caldwell R.B."/>
            <person name="Kierzek A.M."/>
            <person name="Arakawa H."/>
            <person name="Bezzubov Y."/>
            <person name="Zaim J."/>
            <person name="Fiedler P."/>
            <person name="Kutter S."/>
            <person name="Blagodatski A."/>
            <person name="Kostovska D."/>
            <person name="Koter M."/>
            <person name="Plachy J."/>
            <person name="Carninci P."/>
            <person name="Hayashizaki Y."/>
            <person name="Buerstedde J.-M."/>
        </authorList>
    </citation>
    <scope>NUCLEOTIDE SEQUENCE [LARGE SCALE MRNA]</scope>
    <source>
        <strain>CB</strain>
        <tissue>Bursa of Fabricius</tissue>
    </source>
</reference>
<evidence type="ECO:0000250" key="1">
    <source>
        <dbReference type="UniProtKB" id="Q8IXI2"/>
    </source>
</evidence>
<evidence type="ECO:0000255" key="2"/>
<evidence type="ECO:0000255" key="3">
    <source>
        <dbReference type="PROSITE-ProRule" id="PRU00448"/>
    </source>
</evidence>
<evidence type="ECO:0000255" key="4">
    <source>
        <dbReference type="PROSITE-ProRule" id="PRU00757"/>
    </source>
</evidence>
<evidence type="ECO:0000305" key="5"/>